<name>SPIKE_ADE03</name>
<organismHost>
    <name type="scientific">Homo sapiens</name>
    <name type="common">Human</name>
    <dbReference type="NCBI Taxonomy" id="9606"/>
</organismHost>
<protein>
    <recommendedName>
        <fullName>Fiber protein</fullName>
        <shortName>SPIKE</shortName>
    </recommendedName>
    <alternativeName>
        <fullName>Protein IV</fullName>
    </alternativeName>
</protein>
<dbReference type="EMBL" id="X01998">
    <property type="protein sequence ID" value="CAA26029.1"/>
    <property type="molecule type" value="Genomic_DNA"/>
</dbReference>
<dbReference type="PIR" id="A03846">
    <property type="entry name" value="ERADF3"/>
</dbReference>
<dbReference type="PDB" id="1H7Z">
    <property type="method" value="X-ray"/>
    <property type="resolution" value="1.60 A"/>
    <property type="chains" value="A/B/C=126-319"/>
</dbReference>
<dbReference type="PDB" id="4LIY">
    <property type="method" value="X-ray"/>
    <property type="resolution" value="2.10 A"/>
    <property type="chains" value="A/B/C=123-319"/>
</dbReference>
<dbReference type="PDB" id="4WYJ">
    <property type="method" value="X-ray"/>
    <property type="resolution" value="2.65 A"/>
    <property type="chains" value="A/B/C=127-319"/>
</dbReference>
<dbReference type="PDB" id="6F6O">
    <property type="method" value="X-ray"/>
    <property type="resolution" value="1.49 A"/>
    <property type="chains" value="A=124-319"/>
</dbReference>
<dbReference type="PDB" id="6QNT">
    <property type="method" value="EM"/>
    <property type="resolution" value="3.50 A"/>
    <property type="chains" value="A/B/C=130-318"/>
</dbReference>
<dbReference type="PDB" id="6QNU">
    <property type="method" value="EM"/>
    <property type="resolution" value="3.80 A"/>
    <property type="chains" value="A/B/C=130-318"/>
</dbReference>
<dbReference type="PDB" id="6SIT">
    <property type="method" value="X-ray"/>
    <property type="resolution" value="4.50 A"/>
    <property type="chains" value="A=129-319"/>
</dbReference>
<dbReference type="PDBsum" id="1H7Z"/>
<dbReference type="PDBsum" id="4LIY"/>
<dbReference type="PDBsum" id="4WYJ"/>
<dbReference type="PDBsum" id="6F6O"/>
<dbReference type="PDBsum" id="6QNT"/>
<dbReference type="PDBsum" id="6QNU"/>
<dbReference type="PDBsum" id="6SIT"/>
<dbReference type="EMDB" id="EMD-4608"/>
<dbReference type="EMDB" id="EMD-4609"/>
<dbReference type="SASBDB" id="P04501"/>
<dbReference type="SMR" id="P04501"/>
<dbReference type="EvolutionaryTrace" id="P04501"/>
<dbReference type="GO" id="GO:0042025">
    <property type="term" value="C:host cell nucleus"/>
    <property type="evidence" value="ECO:0007669"/>
    <property type="project" value="UniProtKB-SubCell"/>
</dbReference>
<dbReference type="GO" id="GO:0019028">
    <property type="term" value="C:viral capsid"/>
    <property type="evidence" value="ECO:0007669"/>
    <property type="project" value="UniProtKB-KW"/>
</dbReference>
<dbReference type="GO" id="GO:0098671">
    <property type="term" value="P:adhesion receptor-mediated virion attachment to host cell"/>
    <property type="evidence" value="ECO:0007669"/>
    <property type="project" value="UniProtKB-KW"/>
</dbReference>
<dbReference type="GO" id="GO:0007155">
    <property type="term" value="P:cell adhesion"/>
    <property type="evidence" value="ECO:0007669"/>
    <property type="project" value="InterPro"/>
</dbReference>
<dbReference type="GO" id="GO:0046718">
    <property type="term" value="P:symbiont entry into host cell"/>
    <property type="evidence" value="ECO:0007669"/>
    <property type="project" value="UniProtKB-KW"/>
</dbReference>
<dbReference type="Gene3D" id="2.60.90.10">
    <property type="entry name" value="Adenovirus pIV-related, attachment domain"/>
    <property type="match status" value="1"/>
</dbReference>
<dbReference type="Gene3D" id="2.10.25.20">
    <property type="entry name" value="reovirus attachment protein sigma1, domain 1"/>
    <property type="match status" value="1"/>
</dbReference>
<dbReference type="InterPro" id="IPR000931">
    <property type="entry name" value="Adeno_fibre"/>
</dbReference>
<dbReference type="InterPro" id="IPR000978">
    <property type="entry name" value="Adeno_fibre_knob"/>
</dbReference>
<dbReference type="InterPro" id="IPR000939">
    <property type="entry name" value="Adenobir_fibre_prot_rpt/shaft"/>
</dbReference>
<dbReference type="InterPro" id="IPR008982">
    <property type="entry name" value="Adenovirus_pIV-like_att"/>
</dbReference>
<dbReference type="InterPro" id="IPR009013">
    <property type="entry name" value="Attachment_protein_shaft_sf"/>
</dbReference>
<dbReference type="Pfam" id="PF00541">
    <property type="entry name" value="Adeno_knob"/>
    <property type="match status" value="1"/>
</dbReference>
<dbReference type="Pfam" id="PF00608">
    <property type="entry name" value="Adeno_shaft"/>
    <property type="match status" value="2"/>
</dbReference>
<dbReference type="PRINTS" id="PR00307">
    <property type="entry name" value="ADENOVSFIBRE"/>
</dbReference>
<dbReference type="SUPFAM" id="SSF51225">
    <property type="entry name" value="Fibre shaft of virus attachment proteins"/>
    <property type="match status" value="1"/>
</dbReference>
<dbReference type="SUPFAM" id="SSF49835">
    <property type="entry name" value="Virus attachment protein globular domain"/>
    <property type="match status" value="1"/>
</dbReference>
<feature type="chain" id="PRO_0000221787" description="Fiber protein">
    <location>
        <begin position="1"/>
        <end position="319"/>
    </location>
</feature>
<feature type="repeat" description="Shaft 1" evidence="2">
    <location>
        <begin position="44"/>
        <end position="73"/>
    </location>
</feature>
<feature type="repeat" description="Shaft 2" evidence="2">
    <location>
        <begin position="82"/>
        <end position="103"/>
    </location>
</feature>
<feature type="strand" evidence="5">
    <location>
        <begin position="132"/>
        <end position="135"/>
    </location>
</feature>
<feature type="strand" evidence="5">
    <location>
        <begin position="154"/>
        <end position="163"/>
    </location>
</feature>
<feature type="strand" evidence="5">
    <location>
        <begin position="166"/>
        <end position="175"/>
    </location>
</feature>
<feature type="helix" evidence="5">
    <location>
        <begin position="180"/>
        <end position="185"/>
    </location>
</feature>
<feature type="strand" evidence="5">
    <location>
        <begin position="186"/>
        <end position="197"/>
    </location>
</feature>
<feature type="strand" evidence="6">
    <location>
        <begin position="199"/>
        <end position="201"/>
    </location>
</feature>
<feature type="turn" evidence="5">
    <location>
        <begin position="205"/>
        <end position="207"/>
    </location>
</feature>
<feature type="strand" evidence="5">
    <location>
        <begin position="208"/>
        <end position="210"/>
    </location>
</feature>
<feature type="strand" evidence="5">
    <location>
        <begin position="215"/>
        <end position="218"/>
    </location>
</feature>
<feature type="strand" evidence="4">
    <location>
        <begin position="221"/>
        <end position="223"/>
    </location>
</feature>
<feature type="helix" evidence="5">
    <location>
        <begin position="227"/>
        <end position="229"/>
    </location>
</feature>
<feature type="turn" evidence="5">
    <location>
        <begin position="233"/>
        <end position="235"/>
    </location>
</feature>
<feature type="helix" evidence="5">
    <location>
        <begin position="247"/>
        <end position="249"/>
    </location>
</feature>
<feature type="strand" evidence="5">
    <location>
        <begin position="250"/>
        <end position="258"/>
    </location>
</feature>
<feature type="strand" evidence="5">
    <location>
        <begin position="264"/>
        <end position="275"/>
    </location>
</feature>
<feature type="strand" evidence="6">
    <location>
        <begin position="279"/>
        <end position="281"/>
    </location>
</feature>
<feature type="strand" evidence="5">
    <location>
        <begin position="283"/>
        <end position="293"/>
    </location>
</feature>
<feature type="strand" evidence="5">
    <location>
        <begin position="310"/>
        <end position="316"/>
    </location>
</feature>
<reference key="1">
    <citation type="journal article" date="1985" name="J. Virol.">
        <title>Adenovirus 3 fiber polypeptide gene: implications for the structure of the fiber protein.</title>
        <authorList>
            <person name="Signaes C."/>
            <person name="Akusjaervi G."/>
            <person name="Pettersson U."/>
        </authorList>
    </citation>
    <scope>NUCLEOTIDE SEQUENCE [GENOMIC DNA]</scope>
</reference>
<reference key="2">
    <citation type="journal article" date="2004" name="J. Virol.">
        <title>The human membrane cofactor CD46 is a receptor for species B adenovirus serotype 3.</title>
        <authorList>
            <person name="Sirena D."/>
            <person name="Lilienfeld B."/>
            <person name="Eisenhut M."/>
            <person name="Kaelin S."/>
            <person name="Boucke K."/>
            <person name="Beerli R.R."/>
            <person name="Vogt L."/>
            <person name="Ruedl C."/>
            <person name="Bachmann M.F."/>
            <person name="Greber U.F."/>
            <person name="Hemmi S."/>
        </authorList>
    </citation>
    <scope>INTERACTION WITH HUMAN CD46</scope>
</reference>
<reference key="3">
    <citation type="journal article" date="2005" name="J. Virol.">
        <title>Adenovirus receptors.</title>
        <authorList>
            <person name="Zhang Y."/>
            <person name="Bergelson J.M."/>
        </authorList>
    </citation>
    <scope>REVIEW</scope>
</reference>
<reference key="4">
    <citation type="journal article" date="2001" name="Virology">
        <title>Structure of the fiber head of Ad3, a non-CAR-binding serotype of adenovirus.</title>
        <authorList>
            <person name="Durmort C."/>
            <person name="Stehlin C."/>
            <person name="Schoehn G."/>
            <person name="Mitraki A."/>
            <person name="Drouet E."/>
            <person name="Cusack S."/>
            <person name="Burmeister W.P."/>
        </authorList>
    </citation>
    <scope>X-RAY CRYSTALLOGRAPHY (1.6 ANGSTROMS) OF 126-319</scope>
</reference>
<sequence length="319" mass="34815">MAKRARLSTSFNPVYPYEDESSSQHPFINPGFISPDGFTQSPNGVLSLKCVNPLTTASGSLQLKVGSGLTVDTTDGSLEENIKVNTPLTKSNHSINLPIGNGLQIEQNKLCSKLGNGLTFDSSNSIALKNNTLWTGPKPEANCIIEYGKQNPDSKLTLILVKNGGIVNGYVTLMGASDYVNTLFKNKNVSINVELYFDATGHILPDSSSLKTDLELKYKQTADFSARGFMPSTTAYPFVLPNAGTHNENYIFGQCYYKASDGALFPLEVTVMLNKRLPDSRTSYVMTFLWSLNAGLAPETTQATLITSPFTFSYIREDD</sequence>
<gene>
    <name type="ORF">L5</name>
</gene>
<organism>
    <name type="scientific">Human adenovirus B serotype 3</name>
    <name type="common">HAdV-3</name>
    <name type="synonym">Human adenovirus 3</name>
    <dbReference type="NCBI Taxonomy" id="45659"/>
    <lineage>
        <taxon>Viruses</taxon>
        <taxon>Varidnaviria</taxon>
        <taxon>Bamfordvirae</taxon>
        <taxon>Preplasmiviricota</taxon>
        <taxon>Tectiliviricetes</taxon>
        <taxon>Rowavirales</taxon>
        <taxon>Adenoviridae</taxon>
        <taxon>Mastadenovirus</taxon>
        <taxon>Human mastadenovirus B</taxon>
    </lineage>
</organism>
<comment type="function">
    <text>Forms spikes that protrude from each vertex of the icosahedral capsid. Interacts with host receptor CD46 to provide virion initial attachment to target cell. Fiber proteins are shed during virus entry, when virus is still at the cell surface. Heparan sulfate might also play a role in virus binding.</text>
</comment>
<comment type="subunit">
    <text evidence="1">Homotrimer. Interacts with host receptor CD46. Interacts (via N-terminal tail region) with pentons (By similarity).</text>
</comment>
<comment type="subcellular location">
    <subcellularLocation>
        <location evidence="1">Virion</location>
    </subcellularLocation>
    <subcellularLocation>
        <location evidence="1">Host nucleus</location>
    </subcellularLocation>
    <text evidence="1">Anchored to the pentons, protrudes from the virion surface.</text>
</comment>
<comment type="induction">
    <text>Expressed in the late phase of the viral replicative cycle.</text>
</comment>
<comment type="domain">
    <text evidence="1">The tail region anchors the fiber to penton base capsomers, whereas the shaft, built from several repeated motifs, allows the knob to protrude from the virion.</text>
</comment>
<comment type="miscellaneous">
    <text evidence="1">All late proteins expressed from the major late promoter are produced by alternative splicing and alternative polyadenylation of the same gene giving rise to non-overlapping ORFs. A leader sequence is present in the N-terminus of all these mRNAs and is recognized by the viral shutoff protein to provide expression although conventional translation via ribosome scanning from the cap has been shut off in the host cell (By similarity).</text>
</comment>
<comment type="similarity">
    <text evidence="3">Belongs to the adenoviridae fiber family.</text>
</comment>
<proteinExistence type="evidence at protein level"/>
<accession>P04501</accession>
<keyword id="KW-0002">3D-structure</keyword>
<keyword id="KW-0167">Capsid protein</keyword>
<keyword id="KW-1048">Host nucleus</keyword>
<keyword id="KW-0945">Host-virus interaction</keyword>
<keyword id="KW-0426">Late protein</keyword>
<keyword id="KW-0677">Repeat</keyword>
<keyword id="KW-1233">Viral attachment to host adhesion receptor</keyword>
<keyword id="KW-1161">Viral attachment to host cell</keyword>
<keyword id="KW-0946">Virion</keyword>
<keyword id="KW-1160">Virus entry into host cell</keyword>
<evidence type="ECO:0000250" key="1"/>
<evidence type="ECO:0000255" key="2"/>
<evidence type="ECO:0000305" key="3"/>
<evidence type="ECO:0007829" key="4">
    <source>
        <dbReference type="PDB" id="1H7Z"/>
    </source>
</evidence>
<evidence type="ECO:0007829" key="5">
    <source>
        <dbReference type="PDB" id="6F6O"/>
    </source>
</evidence>
<evidence type="ECO:0007829" key="6">
    <source>
        <dbReference type="PDB" id="6QNT"/>
    </source>
</evidence>